<dbReference type="EMBL" id="AF291466">
    <property type="protein sequence ID" value="AAK20996.1"/>
    <property type="status" value="ALT_INIT"/>
    <property type="molecule type" value="mRNA"/>
</dbReference>
<dbReference type="EMBL" id="BC126081">
    <property type="protein sequence ID" value="AAI26082.1"/>
    <property type="molecule type" value="mRNA"/>
</dbReference>
<dbReference type="EMBL" id="AB046606">
    <property type="protein sequence ID" value="BAB20802.1"/>
    <property type="status" value="ALT_INIT"/>
    <property type="molecule type" value="mRNA"/>
</dbReference>
<dbReference type="FunCoup" id="Q99MU5">
    <property type="interactions" value="1250"/>
</dbReference>
<dbReference type="STRING" id="10116.ENSRNOP00000010524"/>
<dbReference type="iPTMnet" id="Q99MU5"/>
<dbReference type="PhosphoSitePlus" id="Q99MU5"/>
<dbReference type="PaxDb" id="10116-ENSRNOP00000010524"/>
<dbReference type="UCSC" id="RGD:628657">
    <property type="organism name" value="rat"/>
</dbReference>
<dbReference type="AGR" id="RGD:628657"/>
<dbReference type="RGD" id="628657">
    <property type="gene designation" value="Spata6"/>
</dbReference>
<dbReference type="eggNOG" id="ENOG502QRV3">
    <property type="taxonomic scope" value="Eukaryota"/>
</dbReference>
<dbReference type="InParanoid" id="Q99MU5"/>
<dbReference type="PhylomeDB" id="Q99MU5"/>
<dbReference type="PRO" id="PR:Q99MU5"/>
<dbReference type="Proteomes" id="UP000002494">
    <property type="component" value="Unplaced"/>
</dbReference>
<dbReference type="GO" id="GO:0005576">
    <property type="term" value="C:extracellular region"/>
    <property type="evidence" value="ECO:0007669"/>
    <property type="project" value="UniProtKB-SubCell"/>
</dbReference>
<dbReference type="GO" id="GO:0031514">
    <property type="term" value="C:motile cilium"/>
    <property type="evidence" value="ECO:0007669"/>
    <property type="project" value="UniProtKB-SubCell"/>
</dbReference>
<dbReference type="GO" id="GO:0120212">
    <property type="term" value="C:sperm head-tail coupling apparatus"/>
    <property type="evidence" value="ECO:0000250"/>
    <property type="project" value="UniProtKB"/>
</dbReference>
<dbReference type="GO" id="GO:0032027">
    <property type="term" value="F:myosin light chain binding"/>
    <property type="evidence" value="ECO:0000266"/>
    <property type="project" value="RGD"/>
</dbReference>
<dbReference type="GO" id="GO:0030154">
    <property type="term" value="P:cell differentiation"/>
    <property type="evidence" value="ECO:0007669"/>
    <property type="project" value="UniProtKB-KW"/>
</dbReference>
<dbReference type="GO" id="GO:0044458">
    <property type="term" value="P:motile cilium assembly"/>
    <property type="evidence" value="ECO:0000250"/>
    <property type="project" value="UniProtKB"/>
</dbReference>
<dbReference type="GO" id="GO:0007283">
    <property type="term" value="P:spermatogenesis"/>
    <property type="evidence" value="ECO:0000250"/>
    <property type="project" value="UniProtKB"/>
</dbReference>
<dbReference type="InterPro" id="IPR042769">
    <property type="entry name" value="SPATA6_fam"/>
</dbReference>
<dbReference type="InterPro" id="IPR032732">
    <property type="entry name" value="SPATA6_N"/>
</dbReference>
<dbReference type="PANTHER" id="PTHR16435:SF3">
    <property type="entry name" value="SPERMATOGENESIS-ASSOCIATED PROTEIN 6"/>
    <property type="match status" value="1"/>
</dbReference>
<dbReference type="PANTHER" id="PTHR16435">
    <property type="entry name" value="SPERMATOGENESIS-ASSOCIATED PROTEIN 6 SPATA6"/>
    <property type="match status" value="1"/>
</dbReference>
<dbReference type="Pfam" id="PF14909">
    <property type="entry name" value="SPATA6"/>
    <property type="match status" value="1"/>
</dbReference>
<gene>
    <name type="primary">Spata6</name>
    <name type="synonym">Hash</name>
    <name type="synonym">Srf1</name>
</gene>
<reference key="1">
    <citation type="journal article" date="2003" name="Mol. Hum. Reprod.">
        <title>Characterization, expression pattern and chromosomal localization of the spermatogenesis associated 6 gene (Spata6).</title>
        <authorList>
            <person name="Oh C."/>
            <person name="Aho H."/>
            <person name="Shamsadin R."/>
            <person name="Nayernia K."/>
            <person name="Mueller C."/>
            <person name="Sancken U."/>
            <person name="Szpirer C."/>
            <person name="Engel W."/>
            <person name="Adham I.M."/>
        </authorList>
    </citation>
    <scope>NUCLEOTIDE SEQUENCE [MRNA]</scope>
    <source>
        <strain>Sprague-Dawley</strain>
    </source>
</reference>
<reference key="2">
    <citation type="journal article" date="2004" name="Genome Res.">
        <title>The status, quality, and expansion of the NIH full-length cDNA project: the Mammalian Gene Collection (MGC).</title>
        <authorList>
            <consortium name="The MGC Project Team"/>
        </authorList>
    </citation>
    <scope>NUCLEOTIDE SEQUENCE [LARGE SCALE MRNA] OF 1-431</scope>
    <source>
        <tissue>Testis</tissue>
    </source>
</reference>
<reference key="3">
    <citation type="journal article" date="2001" name="Biochem. Biophys. Res. Commun.">
        <title>A novel spermatogenesis-related factor-1 gene expressed in maturing rat testis.</title>
        <authorList>
            <person name="Yamano Y."/>
            <person name="Ohyama K."/>
            <person name="Sano T."/>
            <person name="Ohta M."/>
            <person name="Shimada A."/>
            <person name="Hirakawa Y."/>
            <person name="Sugimoto M."/>
            <person name="Morishima I."/>
        </authorList>
    </citation>
    <scope>NUCLEOTIDE SEQUENCE [MRNA] OF 259-488</scope>
    <scope>TISSUE SPECIFICITY</scope>
    <scope>DEVELOPMENTAL STAGE</scope>
</reference>
<reference key="4">
    <citation type="journal article" date="2012" name="Nat. Commun.">
        <title>Quantitative maps of protein phosphorylation sites across 14 different rat organs and tissues.</title>
        <authorList>
            <person name="Lundby A."/>
            <person name="Secher A."/>
            <person name="Lage K."/>
            <person name="Nordsborg N.B."/>
            <person name="Dmytriyev A."/>
            <person name="Lundby C."/>
            <person name="Olsen J.V."/>
        </authorList>
    </citation>
    <scope>PHOSPHORYLATION [LARGE SCALE ANALYSIS] AT SER-217; SER-219; SER-265; SER-274; SER-325; SER-343; SER-346; SER-354; SER-424; SER-465 AND SER-487</scope>
    <scope>IDENTIFICATION BY MASS SPECTROMETRY [LARGE SCALE ANALYSIS]</scope>
</reference>
<sequence>MPKVKALQCALALEIRSVTCPGVLLKDKEDIYLSICVFGQYKKTQCVPATFPLVFNARMVFEKVFPEAVDPGDVVAQLEYDTAVFELIQLVPPVGETLSTYDENTRDFMFPGPNQISGHHDSNRQVTMRRISGLRGIAPKLEFSTTSVITECLISSRKCRTQDKFTYHSAPVEKPHGRLQCRTSRSQKKKSKSPERSKYCINTKNYEQPTISSKSHSPSPYTKRRMCELSEDTRRRLAHLNLGPYEFKKETDKPPFVIRHVDPPSPRADNFFGSPGRDCERDGWVRMHSDHPHLGCCRAKDYKVIRSPHGRDFEDPFERCEDYLSPRTCSKPQHSARTLLVHSAPSTTPKHCASPVLNRASLRERFHSDWCSPPNCDEIHDRVKDVLKSHQAHGRHLCEERDPEKEDELELKRSLLYRDSAYDSDPEYSSFQRPRGSFHLDDGECWSNRAASCKGKSHRPVFENSMDKMYRNLYQKACSSVSHTQESF</sequence>
<accession>Q99MU5</accession>
<accession>A0JN12</accession>
<accession>Q9EQU0</accession>
<feature type="signal peptide" evidence="3">
    <location>
        <begin position="1"/>
        <end position="17"/>
    </location>
</feature>
<feature type="chain" id="PRO_0000278443" description="Spermatogenesis-associated protein 6">
    <location>
        <begin position="18"/>
        <end position="488"/>
    </location>
</feature>
<feature type="region of interest" description="Disordered" evidence="4">
    <location>
        <begin position="175"/>
        <end position="225"/>
    </location>
</feature>
<feature type="compositionally biased region" description="Polar residues" evidence="4">
    <location>
        <begin position="200"/>
        <end position="220"/>
    </location>
</feature>
<feature type="modified residue" description="Phosphoserine" evidence="7">
    <location>
        <position position="217"/>
    </location>
</feature>
<feature type="modified residue" description="Phosphoserine" evidence="7">
    <location>
        <position position="219"/>
    </location>
</feature>
<feature type="modified residue" description="Phosphoserine" evidence="7">
    <location>
        <position position="265"/>
    </location>
</feature>
<feature type="modified residue" description="Phosphoserine" evidence="7">
    <location>
        <position position="274"/>
    </location>
</feature>
<feature type="modified residue" description="Phosphoserine" evidence="7">
    <location>
        <position position="325"/>
    </location>
</feature>
<feature type="modified residue" description="Phosphoserine" evidence="7">
    <location>
        <position position="343"/>
    </location>
</feature>
<feature type="modified residue" description="Phosphoserine" evidence="7">
    <location>
        <position position="346"/>
    </location>
</feature>
<feature type="modified residue" description="Phosphoserine" evidence="7">
    <location>
        <position position="354"/>
    </location>
</feature>
<feature type="modified residue" description="Phosphoserine" evidence="7">
    <location>
        <position position="424"/>
    </location>
</feature>
<feature type="modified residue" description="Phosphoserine" evidence="7">
    <location>
        <position position="465"/>
    </location>
</feature>
<feature type="modified residue" description="Phosphoserine" evidence="7">
    <location>
        <position position="487"/>
    </location>
</feature>
<feature type="cross-link" description="Glycyl lysine isopeptide (Lys-Gly) (interchain with G-Cter in SUMO2)" evidence="2">
    <location>
        <position position="248"/>
    </location>
</feature>
<feature type="sequence conflict" description="In Ref. 2; AAI26082." evidence="6" ref="2">
    <original>L</original>
    <variation>V</variation>
    <location>
        <position position="24"/>
    </location>
</feature>
<feature type="sequence conflict" description="In Ref. 3; BAB20802." evidence="6" ref="3">
    <original>Q</original>
    <variation>K</variation>
    <location>
        <position position="475"/>
    </location>
</feature>
<protein>
    <recommendedName>
        <fullName>Spermatogenesis-associated protein 6</fullName>
    </recommendedName>
    <alternativeName>
        <fullName>Kinesin-related protein</fullName>
    </alternativeName>
    <alternativeName>
        <fullName>Spermatogenesis-related factor 1</fullName>
    </alternativeName>
</protein>
<evidence type="ECO:0000250" key="1">
    <source>
        <dbReference type="UniProtKB" id="Q3U6K5"/>
    </source>
</evidence>
<evidence type="ECO:0000250" key="2">
    <source>
        <dbReference type="UniProtKB" id="Q9NWH7"/>
    </source>
</evidence>
<evidence type="ECO:0000255" key="3"/>
<evidence type="ECO:0000256" key="4">
    <source>
        <dbReference type="SAM" id="MobiDB-lite"/>
    </source>
</evidence>
<evidence type="ECO:0000269" key="5">
    <source>
    </source>
</evidence>
<evidence type="ECO:0000305" key="6"/>
<evidence type="ECO:0007744" key="7">
    <source>
    </source>
</evidence>
<organism>
    <name type="scientific">Rattus norvegicus</name>
    <name type="common">Rat</name>
    <dbReference type="NCBI Taxonomy" id="10116"/>
    <lineage>
        <taxon>Eukaryota</taxon>
        <taxon>Metazoa</taxon>
        <taxon>Chordata</taxon>
        <taxon>Craniata</taxon>
        <taxon>Vertebrata</taxon>
        <taxon>Euteleostomi</taxon>
        <taxon>Mammalia</taxon>
        <taxon>Eutheria</taxon>
        <taxon>Euarchontoglires</taxon>
        <taxon>Glires</taxon>
        <taxon>Rodentia</taxon>
        <taxon>Myomorpha</taxon>
        <taxon>Muroidea</taxon>
        <taxon>Muridae</taxon>
        <taxon>Murinae</taxon>
        <taxon>Rattus</taxon>
    </lineage>
</organism>
<proteinExistence type="evidence at protein level"/>
<name>SPAT6_RAT</name>
<comment type="function">
    <text evidence="1">Required for formation of the sperm connecting piece during spermiogenesis. Sperm connecting piece is essential for linking the developing flagellum to the head during late spermiogenesis. May be involved in myosin-based microfilament transport through interaction with myosin subunits.</text>
</comment>
<comment type="subunit">
    <text evidence="1">Interacts with MYL6.</text>
</comment>
<comment type="subcellular location">
    <subcellularLocation>
        <location evidence="1">Secreted</location>
    </subcellularLocation>
    <subcellularLocation>
        <location evidence="1">Cell projection</location>
        <location evidence="1">Cilium</location>
        <location evidence="1">Flagellum</location>
    </subcellularLocation>
    <text evidence="1">Specifically localizes to the segmented columns and the capitulum of the sperm connecting piece.</text>
</comment>
<comment type="tissue specificity">
    <text evidence="5">Testis-specific, in spermatocytes.</text>
</comment>
<comment type="developmental stage">
    <text evidence="5">Expression, first detected at 5 weeks of age, increases up to 15 weeks and remains high for at least 63 weeks.</text>
</comment>
<comment type="similarity">
    <text evidence="6">Belongs to the SPATA6 family.</text>
</comment>
<comment type="sequence caution" evidence="6">
    <conflict type="erroneous initiation">
        <sequence resource="EMBL-CDS" id="AAK20996"/>
    </conflict>
    <text>Truncated N-terminus.</text>
</comment>
<comment type="sequence caution" evidence="6">
    <conflict type="erroneous initiation">
        <sequence resource="EMBL-CDS" id="BAB20802"/>
    </conflict>
    <text>Truncated N-terminus.</text>
</comment>
<keyword id="KW-0966">Cell projection</keyword>
<keyword id="KW-0969">Cilium</keyword>
<keyword id="KW-0217">Developmental protein</keyword>
<keyword id="KW-0221">Differentiation</keyword>
<keyword id="KW-0282">Flagellum</keyword>
<keyword id="KW-1017">Isopeptide bond</keyword>
<keyword id="KW-0597">Phosphoprotein</keyword>
<keyword id="KW-1185">Reference proteome</keyword>
<keyword id="KW-0964">Secreted</keyword>
<keyword id="KW-0732">Signal</keyword>
<keyword id="KW-0744">Spermatogenesis</keyword>
<keyword id="KW-0832">Ubl conjugation</keyword>